<feature type="chain" id="PRO_0000101559" description="Ribosomal RNA small subunit methyltransferase A">
    <location>
        <begin position="1"/>
        <end position="259"/>
    </location>
</feature>
<feature type="binding site" evidence="1">
    <location>
        <position position="13"/>
    </location>
    <ligand>
        <name>S-adenosyl-L-methionine</name>
        <dbReference type="ChEBI" id="CHEBI:59789"/>
    </ligand>
</feature>
<feature type="binding site" evidence="1">
    <location>
        <position position="15"/>
    </location>
    <ligand>
        <name>S-adenosyl-L-methionine</name>
        <dbReference type="ChEBI" id="CHEBI:59789"/>
    </ligand>
</feature>
<feature type="binding site" evidence="1">
    <location>
        <position position="40"/>
    </location>
    <ligand>
        <name>S-adenosyl-L-methionine</name>
        <dbReference type="ChEBI" id="CHEBI:59789"/>
    </ligand>
</feature>
<feature type="binding site" evidence="1">
    <location>
        <position position="61"/>
    </location>
    <ligand>
        <name>S-adenosyl-L-methionine</name>
        <dbReference type="ChEBI" id="CHEBI:59789"/>
    </ligand>
</feature>
<feature type="binding site" evidence="1">
    <location>
        <position position="85"/>
    </location>
    <ligand>
        <name>S-adenosyl-L-methionine</name>
        <dbReference type="ChEBI" id="CHEBI:59789"/>
    </ligand>
</feature>
<feature type="binding site" evidence="1">
    <location>
        <position position="105"/>
    </location>
    <ligand>
        <name>S-adenosyl-L-methionine</name>
        <dbReference type="ChEBI" id="CHEBI:59789"/>
    </ligand>
</feature>
<feature type="sequence conflict" description="In Ref. 2." evidence="2" ref="2">
    <original>SPCQLF</original>
    <variation>MSLSTL</variation>
    <location>
        <begin position="243"/>
        <end position="248"/>
    </location>
</feature>
<name>RSMA_MYCGE</name>
<dbReference type="EC" id="2.1.1.182" evidence="1"/>
<dbReference type="EMBL" id="L43967">
    <property type="protein sequence ID" value="AAC72483.1"/>
    <property type="molecule type" value="Genomic_DNA"/>
</dbReference>
<dbReference type="EMBL" id="U01719">
    <property type="protein sequence ID" value="AAC43194.1"/>
    <property type="molecule type" value="Unassigned_DNA"/>
</dbReference>
<dbReference type="PIR" id="B64251">
    <property type="entry name" value="B64251"/>
</dbReference>
<dbReference type="RefSeq" id="WP_010869490.1">
    <property type="nucleotide sequence ID" value="NC_000908.2"/>
</dbReference>
<dbReference type="SMR" id="P47701"/>
<dbReference type="FunCoup" id="P47701">
    <property type="interactions" value="173"/>
</dbReference>
<dbReference type="STRING" id="243273.MG_463"/>
<dbReference type="GeneID" id="88282644"/>
<dbReference type="KEGG" id="mge:MG_463"/>
<dbReference type="eggNOG" id="COG0030">
    <property type="taxonomic scope" value="Bacteria"/>
</dbReference>
<dbReference type="HOGENOM" id="CLU_041220_0_2_14"/>
<dbReference type="InParanoid" id="P47701"/>
<dbReference type="OrthoDB" id="9814755at2"/>
<dbReference type="BioCyc" id="MGEN243273:G1GJ2-557-MONOMER"/>
<dbReference type="Proteomes" id="UP000000807">
    <property type="component" value="Chromosome"/>
</dbReference>
<dbReference type="GO" id="GO:0005829">
    <property type="term" value="C:cytosol"/>
    <property type="evidence" value="ECO:0000318"/>
    <property type="project" value="GO_Central"/>
</dbReference>
<dbReference type="GO" id="GO:0052908">
    <property type="term" value="F:16S rRNA (adenine(1518)-N(6)/adenine(1519)-N(6))-dimethyltransferase activity"/>
    <property type="evidence" value="ECO:0007669"/>
    <property type="project" value="UniProtKB-EC"/>
</dbReference>
<dbReference type="GO" id="GO:0003723">
    <property type="term" value="F:RNA binding"/>
    <property type="evidence" value="ECO:0007669"/>
    <property type="project" value="UniProtKB-KW"/>
</dbReference>
<dbReference type="GO" id="GO:0000179">
    <property type="term" value="F:rRNA (adenine-N6,N6-)-dimethyltransferase activity"/>
    <property type="evidence" value="ECO:0000318"/>
    <property type="project" value="GO_Central"/>
</dbReference>
<dbReference type="GO" id="GO:0031167">
    <property type="term" value="P:rRNA methylation"/>
    <property type="evidence" value="ECO:0000318"/>
    <property type="project" value="GO_Central"/>
</dbReference>
<dbReference type="Gene3D" id="1.10.8.100">
    <property type="entry name" value="Ribosomal RNA adenine dimethylase-like, domain 2"/>
    <property type="match status" value="1"/>
</dbReference>
<dbReference type="Gene3D" id="3.40.50.150">
    <property type="entry name" value="Vaccinia Virus protein VP39"/>
    <property type="match status" value="1"/>
</dbReference>
<dbReference type="HAMAP" id="MF_00607">
    <property type="entry name" value="16SrRNA_methyltr_A"/>
    <property type="match status" value="1"/>
</dbReference>
<dbReference type="InterPro" id="IPR001737">
    <property type="entry name" value="KsgA/Erm"/>
</dbReference>
<dbReference type="InterPro" id="IPR023165">
    <property type="entry name" value="rRNA_Ade_diMease-like_C"/>
</dbReference>
<dbReference type="InterPro" id="IPR020596">
    <property type="entry name" value="rRNA_Ade_Mease_Trfase_CS"/>
</dbReference>
<dbReference type="InterPro" id="IPR020598">
    <property type="entry name" value="rRNA_Ade_methylase_Trfase_N"/>
</dbReference>
<dbReference type="InterPro" id="IPR011530">
    <property type="entry name" value="rRNA_adenine_dimethylase"/>
</dbReference>
<dbReference type="InterPro" id="IPR029063">
    <property type="entry name" value="SAM-dependent_MTases_sf"/>
</dbReference>
<dbReference type="NCBIfam" id="TIGR00755">
    <property type="entry name" value="ksgA"/>
    <property type="match status" value="1"/>
</dbReference>
<dbReference type="PANTHER" id="PTHR11727">
    <property type="entry name" value="DIMETHYLADENOSINE TRANSFERASE"/>
    <property type="match status" value="1"/>
</dbReference>
<dbReference type="PANTHER" id="PTHR11727:SF7">
    <property type="entry name" value="DIMETHYLADENOSINE TRANSFERASE-RELATED"/>
    <property type="match status" value="1"/>
</dbReference>
<dbReference type="Pfam" id="PF00398">
    <property type="entry name" value="RrnaAD"/>
    <property type="match status" value="1"/>
</dbReference>
<dbReference type="SMART" id="SM00650">
    <property type="entry name" value="rADc"/>
    <property type="match status" value="1"/>
</dbReference>
<dbReference type="SUPFAM" id="SSF53335">
    <property type="entry name" value="S-adenosyl-L-methionine-dependent methyltransferases"/>
    <property type="match status" value="1"/>
</dbReference>
<dbReference type="PROSITE" id="PS01131">
    <property type="entry name" value="RRNA_A_DIMETH"/>
    <property type="match status" value="1"/>
</dbReference>
<dbReference type="PROSITE" id="PS51689">
    <property type="entry name" value="SAM_RNA_A_N6_MT"/>
    <property type="match status" value="1"/>
</dbReference>
<keyword id="KW-0963">Cytoplasm</keyword>
<keyword id="KW-0489">Methyltransferase</keyword>
<keyword id="KW-1185">Reference proteome</keyword>
<keyword id="KW-0694">RNA-binding</keyword>
<keyword id="KW-0698">rRNA processing</keyword>
<keyword id="KW-0949">S-adenosyl-L-methionine</keyword>
<keyword id="KW-0808">Transferase</keyword>
<proteinExistence type="inferred from homology"/>
<sequence length="259" mass="29954">MNSFFPSRKLGQNFTVNLSVIKRIFAFVKNLNPQAIVEIGVGKGALTNYLLKLKIPYKGIEIDKRLIEYLLVEKILTEDQLVKGDILKKDFNSFFENLSPLLCGNIPYSITSPIINKFLESKLRSFVLMTQKEFANRLLAKVNSSDYSAFGAFCQYYLTITTVFKIDRHAFKPKPKVDSTLILLEKNKSVSYDFKFGLFLKQCFNQRRKMLINNLKHFFAVDYLLNIIQKQNLKTSIRAQELSPCQLFNLYQNICNGKN</sequence>
<protein>
    <recommendedName>
        <fullName evidence="1">Ribosomal RNA small subunit methyltransferase A</fullName>
        <ecNumber evidence="1">2.1.1.182</ecNumber>
    </recommendedName>
    <alternativeName>
        <fullName evidence="1">16S rRNA (adenine(1518)-N(6)/adenine(1519)-N(6))-dimethyltransferase</fullName>
    </alternativeName>
    <alternativeName>
        <fullName evidence="1">16S rRNA dimethyladenosine transferase</fullName>
    </alternativeName>
    <alternativeName>
        <fullName evidence="1">16S rRNA dimethylase</fullName>
    </alternativeName>
    <alternativeName>
        <fullName evidence="1">S-adenosylmethionine-6-N', N'-adenosyl(rRNA) dimethyltransferase</fullName>
    </alternativeName>
</protein>
<accession>P47701</accession>
<accession>Q49194</accession>
<evidence type="ECO:0000255" key="1">
    <source>
        <dbReference type="HAMAP-Rule" id="MF_00607"/>
    </source>
</evidence>
<evidence type="ECO:0000305" key="2"/>
<reference key="1">
    <citation type="journal article" date="1995" name="Science">
        <title>The minimal gene complement of Mycoplasma genitalium.</title>
        <authorList>
            <person name="Fraser C.M."/>
            <person name="Gocayne J.D."/>
            <person name="White O."/>
            <person name="Adams M.D."/>
            <person name="Clayton R.A."/>
            <person name="Fleischmann R.D."/>
            <person name="Bult C.J."/>
            <person name="Kerlavage A.R."/>
            <person name="Sutton G.G."/>
            <person name="Kelley J.M."/>
            <person name="Fritchman J.L."/>
            <person name="Weidman J.F."/>
            <person name="Small K.V."/>
            <person name="Sandusky M."/>
            <person name="Fuhrmann J.L."/>
            <person name="Nguyen D.T."/>
            <person name="Utterback T.R."/>
            <person name="Saudek D.M."/>
            <person name="Phillips C.A."/>
            <person name="Merrick J.M."/>
            <person name="Tomb J.-F."/>
            <person name="Dougherty B.A."/>
            <person name="Bott K.F."/>
            <person name="Hu P.-C."/>
            <person name="Lucier T.S."/>
            <person name="Peterson S.N."/>
            <person name="Smith H.O."/>
            <person name="Hutchison C.A. III"/>
            <person name="Venter J.C."/>
        </authorList>
    </citation>
    <scope>NUCLEOTIDE SEQUENCE [LARGE SCALE GENOMIC DNA]</scope>
    <source>
        <strain>ATCC 33530 / DSM 19775 / NCTC 10195 / G37</strain>
    </source>
</reference>
<reference key="2">
    <citation type="journal article" date="1993" name="J. Bacteriol.">
        <title>A survey of the Mycoplasma genitalium genome by using random sequencing.</title>
        <authorList>
            <person name="Peterson S.N."/>
            <person name="Hu P.-C."/>
            <person name="Bott K.F."/>
            <person name="Hutchison C.A. III"/>
        </authorList>
    </citation>
    <scope>NUCLEOTIDE SEQUENCE [GENOMIC DNA] OF 137-248</scope>
    <source>
        <strain>ATCC 33530 / DSM 19775 / NCTC 10195 / G37</strain>
    </source>
</reference>
<gene>
    <name evidence="1" type="primary">rsmA</name>
    <name evidence="1" type="synonym">ksgA</name>
    <name type="ordered locus">MG463</name>
</gene>
<organism>
    <name type="scientific">Mycoplasma genitalium (strain ATCC 33530 / DSM 19775 / NCTC 10195 / G37)</name>
    <name type="common">Mycoplasmoides genitalium</name>
    <dbReference type="NCBI Taxonomy" id="243273"/>
    <lineage>
        <taxon>Bacteria</taxon>
        <taxon>Bacillati</taxon>
        <taxon>Mycoplasmatota</taxon>
        <taxon>Mycoplasmoidales</taxon>
        <taxon>Mycoplasmoidaceae</taxon>
        <taxon>Mycoplasmoides</taxon>
    </lineage>
</organism>
<comment type="function">
    <text evidence="1">Specifically dimethylates two adjacent adenosines (A1518 and A1519) in the loop of a conserved hairpin near the 3'-end of 16S rRNA in the 30S particle. May play a critical role in biogenesis of 30S subunits.</text>
</comment>
<comment type="catalytic activity">
    <reaction evidence="1">
        <text>adenosine(1518)/adenosine(1519) in 16S rRNA + 4 S-adenosyl-L-methionine = N(6)-dimethyladenosine(1518)/N(6)-dimethyladenosine(1519) in 16S rRNA + 4 S-adenosyl-L-homocysteine + 4 H(+)</text>
        <dbReference type="Rhea" id="RHEA:19609"/>
        <dbReference type="Rhea" id="RHEA-COMP:10232"/>
        <dbReference type="Rhea" id="RHEA-COMP:10233"/>
        <dbReference type="ChEBI" id="CHEBI:15378"/>
        <dbReference type="ChEBI" id="CHEBI:57856"/>
        <dbReference type="ChEBI" id="CHEBI:59789"/>
        <dbReference type="ChEBI" id="CHEBI:74411"/>
        <dbReference type="ChEBI" id="CHEBI:74493"/>
        <dbReference type="EC" id="2.1.1.182"/>
    </reaction>
</comment>
<comment type="subcellular location">
    <subcellularLocation>
        <location evidence="1">Cytoplasm</location>
    </subcellularLocation>
</comment>
<comment type="similarity">
    <text evidence="1">Belongs to the class I-like SAM-binding methyltransferase superfamily. rRNA adenine N(6)-methyltransferase family. RsmA subfamily.</text>
</comment>